<protein>
    <recommendedName>
        <fullName evidence="1">Arginine biosynthesis bifunctional protein ArgJ</fullName>
    </recommendedName>
    <domain>
        <recommendedName>
            <fullName evidence="1">Glutamate N-acetyltransferase</fullName>
            <ecNumber evidence="1">2.3.1.35</ecNumber>
        </recommendedName>
        <alternativeName>
            <fullName evidence="1">Ornithine acetyltransferase</fullName>
            <shortName evidence="1">OATase</shortName>
        </alternativeName>
        <alternativeName>
            <fullName evidence="1">Ornithine transacetylase</fullName>
        </alternativeName>
    </domain>
    <domain>
        <recommendedName>
            <fullName evidence="1">Amino-acid acetyltransferase</fullName>
            <ecNumber evidence="1">2.3.1.1</ecNumber>
        </recommendedName>
        <alternativeName>
            <fullName evidence="1">N-acetylglutamate synthase</fullName>
            <shortName evidence="1">AGSase</shortName>
        </alternativeName>
    </domain>
    <component>
        <recommendedName>
            <fullName evidence="1">Arginine biosynthesis bifunctional protein ArgJ alpha chain</fullName>
        </recommendedName>
    </component>
    <component>
        <recommendedName>
            <fullName evidence="1">Arginine biosynthesis bifunctional protein ArgJ beta chain</fullName>
        </recommendedName>
    </component>
</protein>
<dbReference type="EC" id="2.3.1.35" evidence="1"/>
<dbReference type="EC" id="2.3.1.1" evidence="1"/>
<dbReference type="EMBL" id="AP008231">
    <property type="protein sequence ID" value="BAD80389.1"/>
    <property type="molecule type" value="Genomic_DNA"/>
</dbReference>
<dbReference type="SMR" id="Q5MZY1"/>
<dbReference type="MEROPS" id="T05.002"/>
<dbReference type="KEGG" id="syc:syc2199_d"/>
<dbReference type="eggNOG" id="COG1364">
    <property type="taxonomic scope" value="Bacteria"/>
</dbReference>
<dbReference type="UniPathway" id="UPA00068">
    <property type="reaction ID" value="UER00106"/>
</dbReference>
<dbReference type="UniPathway" id="UPA00068">
    <property type="reaction ID" value="UER00111"/>
</dbReference>
<dbReference type="Proteomes" id="UP000001175">
    <property type="component" value="Chromosome"/>
</dbReference>
<dbReference type="GO" id="GO:0005737">
    <property type="term" value="C:cytoplasm"/>
    <property type="evidence" value="ECO:0007669"/>
    <property type="project" value="UniProtKB-SubCell"/>
</dbReference>
<dbReference type="GO" id="GO:0004358">
    <property type="term" value="F:glutamate N-acetyltransferase activity"/>
    <property type="evidence" value="ECO:0007669"/>
    <property type="project" value="UniProtKB-UniRule"/>
</dbReference>
<dbReference type="GO" id="GO:0004042">
    <property type="term" value="F:L-glutamate N-acetyltransferase activity"/>
    <property type="evidence" value="ECO:0007669"/>
    <property type="project" value="UniProtKB-UniRule"/>
</dbReference>
<dbReference type="GO" id="GO:0006526">
    <property type="term" value="P:L-arginine biosynthetic process"/>
    <property type="evidence" value="ECO:0007669"/>
    <property type="project" value="UniProtKB-UniRule"/>
</dbReference>
<dbReference type="GO" id="GO:0006592">
    <property type="term" value="P:ornithine biosynthetic process"/>
    <property type="evidence" value="ECO:0007669"/>
    <property type="project" value="TreeGrafter"/>
</dbReference>
<dbReference type="CDD" id="cd02152">
    <property type="entry name" value="OAT"/>
    <property type="match status" value="1"/>
</dbReference>
<dbReference type="FunFam" id="3.10.20.340:FF:000001">
    <property type="entry name" value="Arginine biosynthesis bifunctional protein ArgJ, chloroplastic"/>
    <property type="match status" value="1"/>
</dbReference>
<dbReference type="FunFam" id="3.60.70.12:FF:000001">
    <property type="entry name" value="Arginine biosynthesis bifunctional protein ArgJ, chloroplastic"/>
    <property type="match status" value="1"/>
</dbReference>
<dbReference type="Gene3D" id="3.10.20.340">
    <property type="entry name" value="ArgJ beta chain, C-terminal domain"/>
    <property type="match status" value="1"/>
</dbReference>
<dbReference type="Gene3D" id="3.60.70.12">
    <property type="entry name" value="L-amino peptidase D-ALA esterase/amidase"/>
    <property type="match status" value="1"/>
</dbReference>
<dbReference type="HAMAP" id="MF_01106">
    <property type="entry name" value="ArgJ"/>
    <property type="match status" value="1"/>
</dbReference>
<dbReference type="InterPro" id="IPR002813">
    <property type="entry name" value="Arg_biosynth_ArgJ"/>
</dbReference>
<dbReference type="InterPro" id="IPR016117">
    <property type="entry name" value="ArgJ-like_dom_sf"/>
</dbReference>
<dbReference type="InterPro" id="IPR042195">
    <property type="entry name" value="ArgJ_beta_C"/>
</dbReference>
<dbReference type="NCBIfam" id="TIGR00120">
    <property type="entry name" value="ArgJ"/>
    <property type="match status" value="1"/>
</dbReference>
<dbReference type="NCBIfam" id="NF003802">
    <property type="entry name" value="PRK05388.1"/>
    <property type="match status" value="1"/>
</dbReference>
<dbReference type="PANTHER" id="PTHR23100">
    <property type="entry name" value="ARGININE BIOSYNTHESIS BIFUNCTIONAL PROTEIN ARGJ"/>
    <property type="match status" value="1"/>
</dbReference>
<dbReference type="PANTHER" id="PTHR23100:SF0">
    <property type="entry name" value="ARGININE BIOSYNTHESIS BIFUNCTIONAL PROTEIN ARGJ, MITOCHONDRIAL"/>
    <property type="match status" value="1"/>
</dbReference>
<dbReference type="Pfam" id="PF01960">
    <property type="entry name" value="ArgJ"/>
    <property type="match status" value="1"/>
</dbReference>
<dbReference type="SUPFAM" id="SSF56266">
    <property type="entry name" value="DmpA/ArgJ-like"/>
    <property type="match status" value="1"/>
</dbReference>
<gene>
    <name evidence="1" type="primary">argJ</name>
    <name type="ordered locus">syc2199_d</name>
</gene>
<feature type="chain" id="PRO_0000227266" description="Arginine biosynthesis bifunctional protein ArgJ alpha chain" evidence="1">
    <location>
        <begin position="1"/>
        <end position="192"/>
    </location>
</feature>
<feature type="chain" id="PRO_0000227267" description="Arginine biosynthesis bifunctional protein ArgJ beta chain" evidence="1">
    <location>
        <begin position="193"/>
        <end position="415"/>
    </location>
</feature>
<feature type="active site" description="Nucleophile" evidence="1">
    <location>
        <position position="193"/>
    </location>
</feature>
<feature type="binding site" evidence="1">
    <location>
        <position position="156"/>
    </location>
    <ligand>
        <name>substrate</name>
    </ligand>
</feature>
<feature type="binding site" evidence="1">
    <location>
        <position position="182"/>
    </location>
    <ligand>
        <name>substrate</name>
    </ligand>
</feature>
<feature type="binding site" evidence="1">
    <location>
        <position position="193"/>
    </location>
    <ligand>
        <name>substrate</name>
    </ligand>
</feature>
<feature type="binding site" evidence="1">
    <location>
        <position position="279"/>
    </location>
    <ligand>
        <name>substrate</name>
    </ligand>
</feature>
<feature type="binding site" evidence="1">
    <location>
        <position position="410"/>
    </location>
    <ligand>
        <name>substrate</name>
    </ligand>
</feature>
<feature type="binding site" evidence="1">
    <location>
        <position position="415"/>
    </location>
    <ligand>
        <name>substrate</name>
    </ligand>
</feature>
<feature type="site" description="Involved in the stabilization of negative charge on the oxyanion by the formation of the oxyanion hole" evidence="1">
    <location>
        <position position="119"/>
    </location>
</feature>
<feature type="site" description="Involved in the stabilization of negative charge on the oxyanion by the formation of the oxyanion hole" evidence="1">
    <location>
        <position position="120"/>
    </location>
</feature>
<feature type="site" description="Cleavage; by autolysis" evidence="1">
    <location>
        <begin position="192"/>
        <end position="193"/>
    </location>
</feature>
<organism>
    <name type="scientific">Synechococcus sp. (strain ATCC 27144 / PCC 6301 / SAUG 1402/1)</name>
    <name type="common">Anacystis nidulans</name>
    <dbReference type="NCBI Taxonomy" id="269084"/>
    <lineage>
        <taxon>Bacteria</taxon>
        <taxon>Bacillati</taxon>
        <taxon>Cyanobacteriota</taxon>
        <taxon>Cyanophyceae</taxon>
        <taxon>Synechococcales</taxon>
        <taxon>Synechococcaceae</taxon>
        <taxon>Synechococcus</taxon>
    </lineage>
</organism>
<evidence type="ECO:0000255" key="1">
    <source>
        <dbReference type="HAMAP-Rule" id="MF_01106"/>
    </source>
</evidence>
<comment type="function">
    <text evidence="1">Catalyzes two activities which are involved in the cyclic version of arginine biosynthesis: the synthesis of N-acetylglutamate from glutamate and acetyl-CoA as the acetyl donor, and of ornithine by transacetylation between N(2)-acetylornithine and glutamate.</text>
</comment>
<comment type="catalytic activity">
    <reaction evidence="1">
        <text>N(2)-acetyl-L-ornithine + L-glutamate = N-acetyl-L-glutamate + L-ornithine</text>
        <dbReference type="Rhea" id="RHEA:15349"/>
        <dbReference type="ChEBI" id="CHEBI:29985"/>
        <dbReference type="ChEBI" id="CHEBI:44337"/>
        <dbReference type="ChEBI" id="CHEBI:46911"/>
        <dbReference type="ChEBI" id="CHEBI:57805"/>
        <dbReference type="EC" id="2.3.1.35"/>
    </reaction>
</comment>
<comment type="catalytic activity">
    <reaction evidence="1">
        <text>L-glutamate + acetyl-CoA = N-acetyl-L-glutamate + CoA + H(+)</text>
        <dbReference type="Rhea" id="RHEA:24292"/>
        <dbReference type="ChEBI" id="CHEBI:15378"/>
        <dbReference type="ChEBI" id="CHEBI:29985"/>
        <dbReference type="ChEBI" id="CHEBI:44337"/>
        <dbReference type="ChEBI" id="CHEBI:57287"/>
        <dbReference type="ChEBI" id="CHEBI:57288"/>
        <dbReference type="EC" id="2.3.1.1"/>
    </reaction>
</comment>
<comment type="pathway">
    <text evidence="1">Amino-acid biosynthesis; L-arginine biosynthesis; L-ornithine and N-acetyl-L-glutamate from L-glutamate and N(2)-acetyl-L-ornithine (cyclic): step 1/1.</text>
</comment>
<comment type="pathway">
    <text evidence="1">Amino-acid biosynthesis; L-arginine biosynthesis; N(2)-acetyl-L-ornithine from L-glutamate: step 1/4.</text>
</comment>
<comment type="subunit">
    <text evidence="1">Heterotetramer of two alpha and two beta chains.</text>
</comment>
<comment type="subcellular location">
    <subcellularLocation>
        <location evidence="1">Cytoplasm</location>
    </subcellularLocation>
</comment>
<comment type="similarity">
    <text evidence="1">Belongs to the ArgJ family.</text>
</comment>
<accession>Q5MZY1</accession>
<proteinExistence type="inferred from homology"/>
<name>ARGJ_SYNP6</name>
<reference key="1">
    <citation type="journal article" date="2007" name="Photosyn. Res.">
        <title>Complete nucleotide sequence of the freshwater unicellular cyanobacterium Synechococcus elongatus PCC 6301 chromosome: gene content and organization.</title>
        <authorList>
            <person name="Sugita C."/>
            <person name="Ogata K."/>
            <person name="Shikata M."/>
            <person name="Jikuya H."/>
            <person name="Takano J."/>
            <person name="Furumichi M."/>
            <person name="Kanehisa M."/>
            <person name="Omata T."/>
            <person name="Sugiura M."/>
            <person name="Sugita M."/>
        </authorList>
    </citation>
    <scope>NUCLEOTIDE SEQUENCE [LARGE SCALE GENOMIC DNA]</scope>
    <source>
        <strain>ATCC 27144 / PCC 6301 / SAUG 1402/1</strain>
    </source>
</reference>
<keyword id="KW-0012">Acyltransferase</keyword>
<keyword id="KW-0028">Amino-acid biosynthesis</keyword>
<keyword id="KW-0055">Arginine biosynthesis</keyword>
<keyword id="KW-0068">Autocatalytic cleavage</keyword>
<keyword id="KW-0963">Cytoplasm</keyword>
<keyword id="KW-0511">Multifunctional enzyme</keyword>
<keyword id="KW-0808">Transferase</keyword>
<sequence>MMQAAWQEISGGLTAPRGFQAAGITAGLKASGQPDLALIVSESDAIAAAVFTTSQVRAACVDFSRQQLDGNSIARAILCNSGQANAATGDQGWSDAVESAEQLAQALQIPSHQVLVASTGVIGQRIKMEALRTGIPQAIAALSPEGGPAAAQAILTTDLVAKQIALELPLGDRTVRIGGIAKGSGMIHPNMATMLSFITCDAAVSPQLWQEMLSRAVDRSFNQITVDGDTSTNDCVFALANGQSRTPAITERGPIADQLEAMLTAVCQHLAKAIARDGEGATCLIEVQVKGTADDAAARAIARTIAGSSLVKSAIFGRDPNWGRIAAAAGRAGVQFNSENLGVRLGEFELLRNGQPLPFDRNAASQYLRDRAAGAYLQDDTVLIQVDVGAGTGQGVAWGCDLSYDYVRINAEYTT</sequence>